<comment type="function">
    <text evidence="1">DEAD-box RNA helicase possibly involved in RNA degradation. Unwinds dsRNA in both 5'- and 3'-directions, has RNA-dependent ATPase activity.</text>
</comment>
<comment type="catalytic activity">
    <reaction evidence="1">
        <text>ATP + H2O = ADP + phosphate + H(+)</text>
        <dbReference type="Rhea" id="RHEA:13065"/>
        <dbReference type="ChEBI" id="CHEBI:15377"/>
        <dbReference type="ChEBI" id="CHEBI:15378"/>
        <dbReference type="ChEBI" id="CHEBI:30616"/>
        <dbReference type="ChEBI" id="CHEBI:43474"/>
        <dbReference type="ChEBI" id="CHEBI:456216"/>
        <dbReference type="EC" id="3.6.4.13"/>
    </reaction>
</comment>
<comment type="subunit">
    <text evidence="1">Oligomerizes, may be a member of the RNA degradosome.</text>
</comment>
<comment type="subcellular location">
    <subcellularLocation>
        <location evidence="1">Cytoplasm</location>
    </subcellularLocation>
</comment>
<comment type="similarity">
    <text evidence="1">Belongs to the DEAD box helicase family. CshA subfamily.</text>
</comment>
<evidence type="ECO:0000255" key="1">
    <source>
        <dbReference type="HAMAP-Rule" id="MF_01493"/>
    </source>
</evidence>
<evidence type="ECO:0000256" key="2">
    <source>
        <dbReference type="SAM" id="MobiDB-lite"/>
    </source>
</evidence>
<gene>
    <name evidence="1" type="primary">cshA</name>
    <name type="ordered locus">SP_1586</name>
</gene>
<organism>
    <name type="scientific">Streptococcus pneumoniae serotype 4 (strain ATCC BAA-334 / TIGR4)</name>
    <dbReference type="NCBI Taxonomy" id="170187"/>
    <lineage>
        <taxon>Bacteria</taxon>
        <taxon>Bacillati</taxon>
        <taxon>Bacillota</taxon>
        <taxon>Bacilli</taxon>
        <taxon>Lactobacillales</taxon>
        <taxon>Streptococcaceae</taxon>
        <taxon>Streptococcus</taxon>
    </lineage>
</organism>
<sequence>MKFNELNLSADLLAEIEKAGFVEASPIQEQTIPLALEGKDVIGQAQTGTGKTAAFGLPTLEKIRTEEATIQALVIAPTRELAVQSQEELFRFGRSKGVKVRSVYGGSSIEKQIKALKSGAHIVVGTPGRLLDLIKRKALKLQDIETLILDEADEMLNMGFLEDIEAIISRVPENRQTLLFSATMPDAIKRIGVQFMKAPEHVKIAAKELTTELVDQYYIRVKEQEKFDTMTRLMDVAQPELAIVFGRTKRRVDELTRGLKIRGFRAEGIHGDLDQNKRLRVLRDFKNGNLDVLVATDVAARGLDISGVTHVYNYDIPQDPESYVHRIGRTGRAGKSGQSITFVAPNEMGYLQIIENLTKKRMKGLKPASVEESFQSKKQVALKKIERDFADETIRANFEKFGKDARKLAAEFTPEELAMYILSLTVQDPDSLPEVEIAREKPLPFKPSGNGFGGKAKGGRGGRRGDDRRERDRRGNGRRDEFKKGSRGNDRFDKEKRYRKDNKKPRNTLSEKQTGFVIRNKGDK</sequence>
<accession>P0A4D7</accession>
<accession>P35599</accession>
<feature type="chain" id="PRO_0000055119" description="DEAD-box ATP-dependent RNA helicase CshA">
    <location>
        <begin position="1"/>
        <end position="524"/>
    </location>
</feature>
<feature type="domain" description="Helicase ATP-binding" evidence="1">
    <location>
        <begin position="32"/>
        <end position="202"/>
    </location>
</feature>
<feature type="domain" description="Helicase C-terminal" evidence="1">
    <location>
        <begin position="213"/>
        <end position="373"/>
    </location>
</feature>
<feature type="region of interest" description="Disordered" evidence="2">
    <location>
        <begin position="440"/>
        <end position="524"/>
    </location>
</feature>
<feature type="short sequence motif" description="Q motif">
    <location>
        <begin position="1"/>
        <end position="29"/>
    </location>
</feature>
<feature type="short sequence motif" description="DEAD box">
    <location>
        <begin position="150"/>
        <end position="153"/>
    </location>
</feature>
<feature type="compositionally biased region" description="Basic and acidic residues" evidence="2">
    <location>
        <begin position="463"/>
        <end position="498"/>
    </location>
</feature>
<feature type="binding site" evidence="1">
    <location>
        <begin position="45"/>
        <end position="52"/>
    </location>
    <ligand>
        <name>ATP</name>
        <dbReference type="ChEBI" id="CHEBI:30616"/>
    </ligand>
</feature>
<reference key="1">
    <citation type="journal article" date="2001" name="Science">
        <title>Complete genome sequence of a virulent isolate of Streptococcus pneumoniae.</title>
        <authorList>
            <person name="Tettelin H."/>
            <person name="Nelson K.E."/>
            <person name="Paulsen I.T."/>
            <person name="Eisen J.A."/>
            <person name="Read T.D."/>
            <person name="Peterson S.N."/>
            <person name="Heidelberg J.F."/>
            <person name="DeBoy R.T."/>
            <person name="Haft D.H."/>
            <person name="Dodson R.J."/>
            <person name="Durkin A.S."/>
            <person name="Gwinn M.L."/>
            <person name="Kolonay J.F."/>
            <person name="Nelson W.C."/>
            <person name="Peterson J.D."/>
            <person name="Umayam L.A."/>
            <person name="White O."/>
            <person name="Salzberg S.L."/>
            <person name="Lewis M.R."/>
            <person name="Radune D."/>
            <person name="Holtzapple E.K."/>
            <person name="Khouri H.M."/>
            <person name="Wolf A.M."/>
            <person name="Utterback T.R."/>
            <person name="Hansen C.L."/>
            <person name="McDonald L.A."/>
            <person name="Feldblyum T.V."/>
            <person name="Angiuoli S.V."/>
            <person name="Dickinson T."/>
            <person name="Hickey E.K."/>
            <person name="Holt I.E."/>
            <person name="Loftus B.J."/>
            <person name="Yang F."/>
            <person name="Smith H.O."/>
            <person name="Venter J.C."/>
            <person name="Dougherty B.A."/>
            <person name="Morrison D.A."/>
            <person name="Hollingshead S.K."/>
            <person name="Fraser C.M."/>
        </authorList>
    </citation>
    <scope>NUCLEOTIDE SEQUENCE [LARGE SCALE GENOMIC DNA]</scope>
    <source>
        <strain>ATCC BAA-334 / TIGR4</strain>
    </source>
</reference>
<protein>
    <recommendedName>
        <fullName evidence="1">DEAD-box ATP-dependent RNA helicase CshA</fullName>
        <ecNumber evidence="1">3.6.4.13</ecNumber>
    </recommendedName>
</protein>
<name>CSHA_STRPN</name>
<dbReference type="EC" id="3.6.4.13" evidence="1"/>
<dbReference type="EMBL" id="AE005672">
    <property type="protein sequence ID" value="AAK75672.1"/>
    <property type="molecule type" value="Genomic_DNA"/>
</dbReference>
<dbReference type="PIR" id="G95184">
    <property type="entry name" value="G95184"/>
</dbReference>
<dbReference type="RefSeq" id="WP_000671113.1">
    <property type="nucleotide sequence ID" value="NZ_CP155539.1"/>
</dbReference>
<dbReference type="SMR" id="P0A4D7"/>
<dbReference type="PaxDb" id="170187-SP_1586"/>
<dbReference type="EnsemblBacteria" id="AAK75672">
    <property type="protein sequence ID" value="AAK75672"/>
    <property type="gene ID" value="SP_1586"/>
</dbReference>
<dbReference type="KEGG" id="spn:SP_1586"/>
<dbReference type="eggNOG" id="COG0513">
    <property type="taxonomic scope" value="Bacteria"/>
</dbReference>
<dbReference type="PhylomeDB" id="P0A4D7"/>
<dbReference type="BioCyc" id="SPNE170187:G1FZB-1605-MONOMER"/>
<dbReference type="Proteomes" id="UP000000585">
    <property type="component" value="Chromosome"/>
</dbReference>
<dbReference type="GO" id="GO:0005829">
    <property type="term" value="C:cytosol"/>
    <property type="evidence" value="ECO:0007669"/>
    <property type="project" value="TreeGrafter"/>
</dbReference>
<dbReference type="GO" id="GO:0005840">
    <property type="term" value="C:ribosome"/>
    <property type="evidence" value="ECO:0007669"/>
    <property type="project" value="TreeGrafter"/>
</dbReference>
<dbReference type="GO" id="GO:0005524">
    <property type="term" value="F:ATP binding"/>
    <property type="evidence" value="ECO:0007669"/>
    <property type="project" value="UniProtKB-UniRule"/>
</dbReference>
<dbReference type="GO" id="GO:0016887">
    <property type="term" value="F:ATP hydrolysis activity"/>
    <property type="evidence" value="ECO:0007669"/>
    <property type="project" value="RHEA"/>
</dbReference>
<dbReference type="GO" id="GO:0003724">
    <property type="term" value="F:RNA helicase activity"/>
    <property type="evidence" value="ECO:0007669"/>
    <property type="project" value="UniProtKB-UniRule"/>
</dbReference>
<dbReference type="GO" id="GO:0033592">
    <property type="term" value="F:RNA strand annealing activity"/>
    <property type="evidence" value="ECO:0007669"/>
    <property type="project" value="TreeGrafter"/>
</dbReference>
<dbReference type="GO" id="GO:0009409">
    <property type="term" value="P:response to cold"/>
    <property type="evidence" value="ECO:0007669"/>
    <property type="project" value="TreeGrafter"/>
</dbReference>
<dbReference type="GO" id="GO:0006401">
    <property type="term" value="P:RNA catabolic process"/>
    <property type="evidence" value="ECO:0007669"/>
    <property type="project" value="UniProtKB-UniRule"/>
</dbReference>
<dbReference type="CDD" id="cd00268">
    <property type="entry name" value="DEADc"/>
    <property type="match status" value="1"/>
</dbReference>
<dbReference type="CDD" id="cd18787">
    <property type="entry name" value="SF2_C_DEAD"/>
    <property type="match status" value="1"/>
</dbReference>
<dbReference type="FunFam" id="3.40.50.300:FF:000108">
    <property type="entry name" value="ATP-dependent RNA helicase RhlE"/>
    <property type="match status" value="1"/>
</dbReference>
<dbReference type="Gene3D" id="3.40.50.300">
    <property type="entry name" value="P-loop containing nucleotide triphosphate hydrolases"/>
    <property type="match status" value="2"/>
</dbReference>
<dbReference type="HAMAP" id="MF_01493">
    <property type="entry name" value="DEAD_helicase_CshA"/>
    <property type="match status" value="1"/>
</dbReference>
<dbReference type="InterPro" id="IPR011545">
    <property type="entry name" value="DEAD/DEAH_box_helicase_dom"/>
</dbReference>
<dbReference type="InterPro" id="IPR050547">
    <property type="entry name" value="DEAD_box_RNA_helicases"/>
</dbReference>
<dbReference type="InterPro" id="IPR030880">
    <property type="entry name" value="DEAD_helicase_CshA"/>
</dbReference>
<dbReference type="InterPro" id="IPR014001">
    <property type="entry name" value="Helicase_ATP-bd"/>
</dbReference>
<dbReference type="InterPro" id="IPR001650">
    <property type="entry name" value="Helicase_C-like"/>
</dbReference>
<dbReference type="InterPro" id="IPR027417">
    <property type="entry name" value="P-loop_NTPase"/>
</dbReference>
<dbReference type="InterPro" id="IPR000629">
    <property type="entry name" value="RNA-helicase_DEAD-box_CS"/>
</dbReference>
<dbReference type="InterPro" id="IPR014014">
    <property type="entry name" value="RNA_helicase_DEAD_Q_motif"/>
</dbReference>
<dbReference type="PANTHER" id="PTHR47963">
    <property type="entry name" value="DEAD-BOX ATP-DEPENDENT RNA HELICASE 47, MITOCHONDRIAL"/>
    <property type="match status" value="1"/>
</dbReference>
<dbReference type="PANTHER" id="PTHR47963:SF5">
    <property type="entry name" value="DEAD-BOX ATP-DEPENDENT RNA HELICASE CSHA"/>
    <property type="match status" value="1"/>
</dbReference>
<dbReference type="Pfam" id="PF00270">
    <property type="entry name" value="DEAD"/>
    <property type="match status" value="1"/>
</dbReference>
<dbReference type="Pfam" id="PF00271">
    <property type="entry name" value="Helicase_C"/>
    <property type="match status" value="1"/>
</dbReference>
<dbReference type="SMART" id="SM00487">
    <property type="entry name" value="DEXDc"/>
    <property type="match status" value="1"/>
</dbReference>
<dbReference type="SMART" id="SM00490">
    <property type="entry name" value="HELICc"/>
    <property type="match status" value="1"/>
</dbReference>
<dbReference type="SUPFAM" id="SSF52540">
    <property type="entry name" value="P-loop containing nucleoside triphosphate hydrolases"/>
    <property type="match status" value="1"/>
</dbReference>
<dbReference type="PROSITE" id="PS00039">
    <property type="entry name" value="DEAD_ATP_HELICASE"/>
    <property type="match status" value="1"/>
</dbReference>
<dbReference type="PROSITE" id="PS51192">
    <property type="entry name" value="HELICASE_ATP_BIND_1"/>
    <property type="match status" value="1"/>
</dbReference>
<dbReference type="PROSITE" id="PS51194">
    <property type="entry name" value="HELICASE_CTER"/>
    <property type="match status" value="1"/>
</dbReference>
<dbReference type="PROSITE" id="PS51195">
    <property type="entry name" value="Q_MOTIF"/>
    <property type="match status" value="1"/>
</dbReference>
<proteinExistence type="inferred from homology"/>
<keyword id="KW-0067">ATP-binding</keyword>
<keyword id="KW-0963">Cytoplasm</keyword>
<keyword id="KW-0347">Helicase</keyword>
<keyword id="KW-0378">Hydrolase</keyword>
<keyword id="KW-0547">Nucleotide-binding</keyword>
<keyword id="KW-1185">Reference proteome</keyword>
<keyword id="KW-0694">RNA-binding</keyword>
<keyword id="KW-0346">Stress response</keyword>